<organism>
    <name type="scientific">Verminephrobacter eiseniae (strain EF01-2)</name>
    <dbReference type="NCBI Taxonomy" id="391735"/>
    <lineage>
        <taxon>Bacteria</taxon>
        <taxon>Pseudomonadati</taxon>
        <taxon>Pseudomonadota</taxon>
        <taxon>Betaproteobacteria</taxon>
        <taxon>Burkholderiales</taxon>
        <taxon>Comamonadaceae</taxon>
        <taxon>Verminephrobacter</taxon>
    </lineage>
</organism>
<comment type="function">
    <text evidence="1">Functions in the biosynthesis of branched-chain amino acids. Catalyzes the dehydration of (2R,3R)-2,3-dihydroxy-3-methylpentanoate (2,3-dihydroxy-3-methylvalerate) into 2-oxo-3-methylpentanoate (2-oxo-3-methylvalerate) and of (2R)-2,3-dihydroxy-3-methylbutanoate (2,3-dihydroxyisovalerate) into 2-oxo-3-methylbutanoate (2-oxoisovalerate), the penultimate precursor to L-isoleucine and L-valine, respectively.</text>
</comment>
<comment type="catalytic activity">
    <reaction evidence="1">
        <text>(2R)-2,3-dihydroxy-3-methylbutanoate = 3-methyl-2-oxobutanoate + H2O</text>
        <dbReference type="Rhea" id="RHEA:24809"/>
        <dbReference type="ChEBI" id="CHEBI:11851"/>
        <dbReference type="ChEBI" id="CHEBI:15377"/>
        <dbReference type="ChEBI" id="CHEBI:49072"/>
        <dbReference type="EC" id="4.2.1.9"/>
    </reaction>
    <physiologicalReaction direction="left-to-right" evidence="1">
        <dbReference type="Rhea" id="RHEA:24810"/>
    </physiologicalReaction>
</comment>
<comment type="catalytic activity">
    <reaction evidence="1">
        <text>(2R,3R)-2,3-dihydroxy-3-methylpentanoate = (S)-3-methyl-2-oxopentanoate + H2O</text>
        <dbReference type="Rhea" id="RHEA:27694"/>
        <dbReference type="ChEBI" id="CHEBI:15377"/>
        <dbReference type="ChEBI" id="CHEBI:35146"/>
        <dbReference type="ChEBI" id="CHEBI:49258"/>
        <dbReference type="EC" id="4.2.1.9"/>
    </reaction>
    <physiologicalReaction direction="left-to-right" evidence="1">
        <dbReference type="Rhea" id="RHEA:27695"/>
    </physiologicalReaction>
</comment>
<comment type="cofactor">
    <cofactor evidence="1">
        <name>[2Fe-2S] cluster</name>
        <dbReference type="ChEBI" id="CHEBI:190135"/>
    </cofactor>
    <text evidence="1">Binds 1 [2Fe-2S] cluster per subunit. This cluster acts as a Lewis acid cofactor.</text>
</comment>
<comment type="cofactor">
    <cofactor evidence="1">
        <name>Mg(2+)</name>
        <dbReference type="ChEBI" id="CHEBI:18420"/>
    </cofactor>
</comment>
<comment type="pathway">
    <text evidence="1">Amino-acid biosynthesis; L-isoleucine biosynthesis; L-isoleucine from 2-oxobutanoate: step 3/4.</text>
</comment>
<comment type="pathway">
    <text evidence="1">Amino-acid biosynthesis; L-valine biosynthesis; L-valine from pyruvate: step 3/4.</text>
</comment>
<comment type="subunit">
    <text evidence="1">Homodimer.</text>
</comment>
<comment type="similarity">
    <text evidence="1">Belongs to the IlvD/Edd family.</text>
</comment>
<gene>
    <name evidence="1" type="primary">ilvD</name>
    <name type="ordered locus">Veis_3222</name>
</gene>
<sequence length="568" mass="59758">MADNKTTTIEPINRRSANITQGKSRAPNRSMYYAMGYVEGDFVKPMVGVANGHSTITPCNSGLQKLTDAAIEGIEEAGGNAQVFGTPTISDGMAMGTEGMKYSLVSREVISDCIETCVSGQWLDGVLVVGGCDKNMPGGLMGMLRANVPAIYVYGGTILPGHYQGRELNIVSVFEAVGENAAGKLSDHDLREIEKRAIPGTGSCGGMYTANTMSSAFEALGISLPYSSTMANPHDEKTNSAKASAKVLIEAIRNDLKPRDIVTRKAIENAVAVIMATGGSTNAVLHFLAIAHAAGVPWSIDDFERVRQKTPVLCDLKPSGKYLAVDLHRAGGIPQVMKLLLNAGLLHGDCITIEGKTMAQVLKDVPDRPRADQNVIRPIDQPLYAQGHLAILKGNLSPEGAVAKITGLKNPVITGPARVFDDEQSALQAILDGKIQAGDVMVLRYLGPKGGPGMPEMLAPTGALIGAGLGESVGLITDGRFSGGTWGMVVGHVAPEAAAGGTIAFVHEGDSITIDARQLLLQLNVAEAEIARRRARWTAPAARYTRGVQAKFAFNASSASQGAVLDAY</sequence>
<evidence type="ECO:0000255" key="1">
    <source>
        <dbReference type="HAMAP-Rule" id="MF_00012"/>
    </source>
</evidence>
<protein>
    <recommendedName>
        <fullName evidence="1">Dihydroxy-acid dehydratase</fullName>
        <shortName evidence="1">DAD</shortName>
        <ecNumber evidence="1">4.2.1.9</ecNumber>
    </recommendedName>
</protein>
<reference key="1">
    <citation type="submission" date="2006-12" db="EMBL/GenBank/DDBJ databases">
        <title>Complete sequence of chromosome 1 of Verminephrobacter eiseniae EF01-2.</title>
        <authorList>
            <person name="Copeland A."/>
            <person name="Lucas S."/>
            <person name="Lapidus A."/>
            <person name="Barry K."/>
            <person name="Detter J.C."/>
            <person name="Glavina del Rio T."/>
            <person name="Dalin E."/>
            <person name="Tice H."/>
            <person name="Pitluck S."/>
            <person name="Chertkov O."/>
            <person name="Brettin T."/>
            <person name="Bruce D."/>
            <person name="Han C."/>
            <person name="Tapia R."/>
            <person name="Gilna P."/>
            <person name="Schmutz J."/>
            <person name="Larimer F."/>
            <person name="Land M."/>
            <person name="Hauser L."/>
            <person name="Kyrpides N."/>
            <person name="Kim E."/>
            <person name="Stahl D."/>
            <person name="Richardson P."/>
        </authorList>
    </citation>
    <scope>NUCLEOTIDE SEQUENCE [LARGE SCALE GENOMIC DNA]</scope>
    <source>
        <strain>EF01-2</strain>
    </source>
</reference>
<keyword id="KW-0001">2Fe-2S</keyword>
<keyword id="KW-0028">Amino-acid biosynthesis</keyword>
<keyword id="KW-0100">Branched-chain amino acid biosynthesis</keyword>
<keyword id="KW-0408">Iron</keyword>
<keyword id="KW-0411">Iron-sulfur</keyword>
<keyword id="KW-0456">Lyase</keyword>
<keyword id="KW-0460">Magnesium</keyword>
<keyword id="KW-0479">Metal-binding</keyword>
<keyword id="KW-1185">Reference proteome</keyword>
<dbReference type="EC" id="4.2.1.9" evidence="1"/>
<dbReference type="EMBL" id="CP000542">
    <property type="protein sequence ID" value="ABM58952.1"/>
    <property type="molecule type" value="Genomic_DNA"/>
</dbReference>
<dbReference type="RefSeq" id="WP_011810944.1">
    <property type="nucleotide sequence ID" value="NC_008786.1"/>
</dbReference>
<dbReference type="SMR" id="A1WMU5"/>
<dbReference type="STRING" id="391735.Veis_3222"/>
<dbReference type="GeneID" id="76461674"/>
<dbReference type="KEGG" id="vei:Veis_3222"/>
<dbReference type="eggNOG" id="COG0129">
    <property type="taxonomic scope" value="Bacteria"/>
</dbReference>
<dbReference type="HOGENOM" id="CLU_014271_4_2_4"/>
<dbReference type="OrthoDB" id="9807077at2"/>
<dbReference type="UniPathway" id="UPA00047">
    <property type="reaction ID" value="UER00057"/>
</dbReference>
<dbReference type="UniPathway" id="UPA00049">
    <property type="reaction ID" value="UER00061"/>
</dbReference>
<dbReference type="Proteomes" id="UP000000374">
    <property type="component" value="Chromosome"/>
</dbReference>
<dbReference type="GO" id="GO:0051537">
    <property type="term" value="F:2 iron, 2 sulfur cluster binding"/>
    <property type="evidence" value="ECO:0007669"/>
    <property type="project" value="UniProtKB-UniRule"/>
</dbReference>
<dbReference type="GO" id="GO:0004160">
    <property type="term" value="F:dihydroxy-acid dehydratase activity"/>
    <property type="evidence" value="ECO:0007669"/>
    <property type="project" value="UniProtKB-UniRule"/>
</dbReference>
<dbReference type="GO" id="GO:0000287">
    <property type="term" value="F:magnesium ion binding"/>
    <property type="evidence" value="ECO:0007669"/>
    <property type="project" value="UniProtKB-UniRule"/>
</dbReference>
<dbReference type="GO" id="GO:0009097">
    <property type="term" value="P:isoleucine biosynthetic process"/>
    <property type="evidence" value="ECO:0007669"/>
    <property type="project" value="UniProtKB-UniRule"/>
</dbReference>
<dbReference type="GO" id="GO:0009099">
    <property type="term" value="P:L-valine biosynthetic process"/>
    <property type="evidence" value="ECO:0007669"/>
    <property type="project" value="UniProtKB-UniRule"/>
</dbReference>
<dbReference type="FunFam" id="3.50.30.80:FF:000001">
    <property type="entry name" value="Dihydroxy-acid dehydratase"/>
    <property type="match status" value="1"/>
</dbReference>
<dbReference type="Gene3D" id="3.50.30.80">
    <property type="entry name" value="IlvD/EDD C-terminal domain-like"/>
    <property type="match status" value="1"/>
</dbReference>
<dbReference type="HAMAP" id="MF_00012">
    <property type="entry name" value="IlvD"/>
    <property type="match status" value="1"/>
</dbReference>
<dbReference type="InterPro" id="IPR050165">
    <property type="entry name" value="DHAD_IlvD/Edd"/>
</dbReference>
<dbReference type="InterPro" id="IPR042096">
    <property type="entry name" value="Dihydro-acid_dehy_C"/>
</dbReference>
<dbReference type="InterPro" id="IPR004404">
    <property type="entry name" value="DihydroxyA_deHydtase"/>
</dbReference>
<dbReference type="InterPro" id="IPR020558">
    <property type="entry name" value="DiOHA_6PGluconate_deHydtase_CS"/>
</dbReference>
<dbReference type="InterPro" id="IPR056740">
    <property type="entry name" value="ILV_EDD_C"/>
</dbReference>
<dbReference type="InterPro" id="IPR000581">
    <property type="entry name" value="ILV_EDD_N"/>
</dbReference>
<dbReference type="InterPro" id="IPR037237">
    <property type="entry name" value="IlvD/EDD_N"/>
</dbReference>
<dbReference type="NCBIfam" id="TIGR00110">
    <property type="entry name" value="ilvD"/>
    <property type="match status" value="1"/>
</dbReference>
<dbReference type="NCBIfam" id="NF002068">
    <property type="entry name" value="PRK00911.1"/>
    <property type="match status" value="1"/>
</dbReference>
<dbReference type="PANTHER" id="PTHR21000">
    <property type="entry name" value="DIHYDROXY-ACID DEHYDRATASE DAD"/>
    <property type="match status" value="1"/>
</dbReference>
<dbReference type="PANTHER" id="PTHR21000:SF5">
    <property type="entry name" value="DIHYDROXY-ACID DEHYDRATASE, MITOCHONDRIAL"/>
    <property type="match status" value="1"/>
</dbReference>
<dbReference type="Pfam" id="PF24877">
    <property type="entry name" value="ILV_EDD_C"/>
    <property type="match status" value="1"/>
</dbReference>
<dbReference type="Pfam" id="PF00920">
    <property type="entry name" value="ILVD_EDD_N"/>
    <property type="match status" value="1"/>
</dbReference>
<dbReference type="SUPFAM" id="SSF143975">
    <property type="entry name" value="IlvD/EDD N-terminal domain-like"/>
    <property type="match status" value="1"/>
</dbReference>
<dbReference type="SUPFAM" id="SSF52016">
    <property type="entry name" value="LeuD/IlvD-like"/>
    <property type="match status" value="1"/>
</dbReference>
<dbReference type="PROSITE" id="PS00886">
    <property type="entry name" value="ILVD_EDD_1"/>
    <property type="match status" value="1"/>
</dbReference>
<dbReference type="PROSITE" id="PS00887">
    <property type="entry name" value="ILVD_EDD_2"/>
    <property type="match status" value="1"/>
</dbReference>
<name>ILVD_VEREI</name>
<proteinExistence type="inferred from homology"/>
<accession>A1WMU5</accession>
<feature type="chain" id="PRO_0000321611" description="Dihydroxy-acid dehydratase">
    <location>
        <begin position="1"/>
        <end position="568"/>
    </location>
</feature>
<feature type="active site" description="Proton acceptor" evidence="1">
    <location>
        <position position="482"/>
    </location>
</feature>
<feature type="binding site" evidence="1">
    <location>
        <position position="59"/>
    </location>
    <ligand>
        <name>[2Fe-2S] cluster</name>
        <dbReference type="ChEBI" id="CHEBI:190135"/>
    </ligand>
</feature>
<feature type="binding site" evidence="1">
    <location>
        <position position="91"/>
    </location>
    <ligand>
        <name>Mg(2+)</name>
        <dbReference type="ChEBI" id="CHEBI:18420"/>
    </ligand>
</feature>
<feature type="binding site" evidence="1">
    <location>
        <position position="132"/>
    </location>
    <ligand>
        <name>[2Fe-2S] cluster</name>
        <dbReference type="ChEBI" id="CHEBI:190135"/>
    </ligand>
</feature>
<feature type="binding site" evidence="1">
    <location>
        <position position="133"/>
    </location>
    <ligand>
        <name>Mg(2+)</name>
        <dbReference type="ChEBI" id="CHEBI:18420"/>
    </ligand>
</feature>
<feature type="binding site" description="via carbamate group" evidence="1">
    <location>
        <position position="134"/>
    </location>
    <ligand>
        <name>Mg(2+)</name>
        <dbReference type="ChEBI" id="CHEBI:18420"/>
    </ligand>
</feature>
<feature type="binding site" evidence="1">
    <location>
        <position position="204"/>
    </location>
    <ligand>
        <name>[2Fe-2S] cluster</name>
        <dbReference type="ChEBI" id="CHEBI:190135"/>
    </ligand>
</feature>
<feature type="binding site" evidence="1">
    <location>
        <position position="456"/>
    </location>
    <ligand>
        <name>Mg(2+)</name>
        <dbReference type="ChEBI" id="CHEBI:18420"/>
    </ligand>
</feature>
<feature type="modified residue" description="N6-carboxylysine" evidence="1">
    <location>
        <position position="134"/>
    </location>
</feature>